<gene>
    <name evidence="1" type="primary">anmK</name>
    <name type="ordered locus">CD630_30510</name>
</gene>
<feature type="chain" id="PRO_1000067343" description="Anhydro-N-acetylmuramic acid kinase">
    <location>
        <begin position="1"/>
        <end position="383"/>
    </location>
</feature>
<feature type="binding site" evidence="1">
    <location>
        <begin position="9"/>
        <end position="16"/>
    </location>
    <ligand>
        <name>ATP</name>
        <dbReference type="ChEBI" id="CHEBI:30616"/>
    </ligand>
</feature>
<sequence>MYSVGLMSGTSLDGIDAVLAEISGNGRNTKVKQIEFITLEISKDIKDEIRKCCIEEESSVDLICSLNFKLGYLFSKAVKSVCHKANFHIANLDFIASHGQTIFHIPRSYNNFVSSTLQIGEPAVIAYETNTKVISNFRVMDIAAGGEGAPLVPYSEFLLYSDKNKNLALQNIGGIGNITIIPKSCNIDDVFAFDTGPGNMIIDGVCQRLFNRKYDKNGYFASKGKINEEMLKDLMSHKYLSQAPPKSTGREVFGQVYLDNMLNKYKHVDKYDLIATVTMFTAKAIYYNYKNFILPKVNVDTLLIGGGGAHNLTLIGYIKELLLEVEVLTQDEYGYSSDAKEALAFVILGNETLNNSFSNVISATGAKNKVILGNITPKPFGGK</sequence>
<accession>Q184N9</accession>
<reference key="1">
    <citation type="journal article" date="2006" name="Nat. Genet.">
        <title>The multidrug-resistant human pathogen Clostridium difficile has a highly mobile, mosaic genome.</title>
        <authorList>
            <person name="Sebaihia M."/>
            <person name="Wren B.W."/>
            <person name="Mullany P."/>
            <person name="Fairweather N.F."/>
            <person name="Minton N."/>
            <person name="Stabler R."/>
            <person name="Thomson N.R."/>
            <person name="Roberts A.P."/>
            <person name="Cerdeno-Tarraga A.M."/>
            <person name="Wang H."/>
            <person name="Holden M.T.G."/>
            <person name="Wright A."/>
            <person name="Churcher C."/>
            <person name="Quail M.A."/>
            <person name="Baker S."/>
            <person name="Bason N."/>
            <person name="Brooks K."/>
            <person name="Chillingworth T."/>
            <person name="Cronin A."/>
            <person name="Davis P."/>
            <person name="Dowd L."/>
            <person name="Fraser A."/>
            <person name="Feltwell T."/>
            <person name="Hance Z."/>
            <person name="Holroyd S."/>
            <person name="Jagels K."/>
            <person name="Moule S."/>
            <person name="Mungall K."/>
            <person name="Price C."/>
            <person name="Rabbinowitsch E."/>
            <person name="Sharp S."/>
            <person name="Simmonds M."/>
            <person name="Stevens K."/>
            <person name="Unwin L."/>
            <person name="Whithead S."/>
            <person name="Dupuy B."/>
            <person name="Dougan G."/>
            <person name="Barrell B."/>
            <person name="Parkhill J."/>
        </authorList>
    </citation>
    <scope>NUCLEOTIDE SEQUENCE [LARGE SCALE GENOMIC DNA]</scope>
    <source>
        <strain>630</strain>
    </source>
</reference>
<proteinExistence type="inferred from homology"/>
<evidence type="ECO:0000255" key="1">
    <source>
        <dbReference type="HAMAP-Rule" id="MF_01270"/>
    </source>
</evidence>
<protein>
    <recommendedName>
        <fullName evidence="1">Anhydro-N-acetylmuramic acid kinase</fullName>
        <ecNumber evidence="1">2.7.1.170</ecNumber>
    </recommendedName>
    <alternativeName>
        <fullName evidence="1">AnhMurNAc kinase</fullName>
    </alternativeName>
</protein>
<comment type="function">
    <text evidence="1">Catalyzes the specific phosphorylation of 1,6-anhydro-N-acetylmuramic acid (anhMurNAc) with the simultaneous cleavage of the 1,6-anhydro ring, generating MurNAc-6-P. Is required for the utilization of anhMurNAc either imported from the medium or derived from its own cell wall murein, and thus plays a role in cell wall recycling.</text>
</comment>
<comment type="catalytic activity">
    <reaction evidence="1">
        <text>1,6-anhydro-N-acetyl-beta-muramate + ATP + H2O = N-acetyl-D-muramate 6-phosphate + ADP + H(+)</text>
        <dbReference type="Rhea" id="RHEA:24952"/>
        <dbReference type="ChEBI" id="CHEBI:15377"/>
        <dbReference type="ChEBI" id="CHEBI:15378"/>
        <dbReference type="ChEBI" id="CHEBI:30616"/>
        <dbReference type="ChEBI" id="CHEBI:58690"/>
        <dbReference type="ChEBI" id="CHEBI:58722"/>
        <dbReference type="ChEBI" id="CHEBI:456216"/>
        <dbReference type="EC" id="2.7.1.170"/>
    </reaction>
</comment>
<comment type="pathway">
    <text evidence="1">Amino-sugar metabolism; 1,6-anhydro-N-acetylmuramate degradation.</text>
</comment>
<comment type="pathway">
    <text evidence="1">Cell wall biogenesis; peptidoglycan recycling.</text>
</comment>
<comment type="similarity">
    <text evidence="1">Belongs to the anhydro-N-acetylmuramic acid kinase family.</text>
</comment>
<dbReference type="EC" id="2.7.1.170" evidence="1"/>
<dbReference type="EMBL" id="AM180355">
    <property type="protein sequence ID" value="CAJ69944.2"/>
    <property type="molecule type" value="Genomic_DNA"/>
</dbReference>
<dbReference type="RefSeq" id="WP_011861795.1">
    <property type="nucleotide sequence ID" value="NZ_JAUPES010000008.1"/>
</dbReference>
<dbReference type="RefSeq" id="YP_001089566.2">
    <property type="nucleotide sequence ID" value="NC_009089.1"/>
</dbReference>
<dbReference type="SMR" id="Q184N9"/>
<dbReference type="STRING" id="272563.CD630_30510"/>
<dbReference type="EnsemblBacteria" id="CAJ69944">
    <property type="protein sequence ID" value="CAJ69944"/>
    <property type="gene ID" value="CD630_30510"/>
</dbReference>
<dbReference type="KEGG" id="cdf:CD630_30510"/>
<dbReference type="KEGG" id="pdc:CDIF630_03335"/>
<dbReference type="PATRIC" id="fig|272563.120.peg.3217"/>
<dbReference type="eggNOG" id="COG2377">
    <property type="taxonomic scope" value="Bacteria"/>
</dbReference>
<dbReference type="OrthoDB" id="9763949at2"/>
<dbReference type="PhylomeDB" id="Q184N9"/>
<dbReference type="BioCyc" id="PDIF272563:G12WB-3213-MONOMER"/>
<dbReference type="UniPathway" id="UPA00343"/>
<dbReference type="UniPathway" id="UPA00544"/>
<dbReference type="Proteomes" id="UP000001978">
    <property type="component" value="Chromosome"/>
</dbReference>
<dbReference type="GO" id="GO:0005524">
    <property type="term" value="F:ATP binding"/>
    <property type="evidence" value="ECO:0007669"/>
    <property type="project" value="UniProtKB-UniRule"/>
</dbReference>
<dbReference type="GO" id="GO:0016301">
    <property type="term" value="F:kinase activity"/>
    <property type="evidence" value="ECO:0007669"/>
    <property type="project" value="UniProtKB-KW"/>
</dbReference>
<dbReference type="GO" id="GO:0016773">
    <property type="term" value="F:phosphotransferase activity, alcohol group as acceptor"/>
    <property type="evidence" value="ECO:0007669"/>
    <property type="project" value="UniProtKB-UniRule"/>
</dbReference>
<dbReference type="GO" id="GO:0097175">
    <property type="term" value="P:1,6-anhydro-N-acetyl-beta-muramic acid catabolic process"/>
    <property type="evidence" value="ECO:0007669"/>
    <property type="project" value="UniProtKB-UniRule"/>
</dbReference>
<dbReference type="GO" id="GO:0006040">
    <property type="term" value="P:amino sugar metabolic process"/>
    <property type="evidence" value="ECO:0007669"/>
    <property type="project" value="InterPro"/>
</dbReference>
<dbReference type="GO" id="GO:0009254">
    <property type="term" value="P:peptidoglycan turnover"/>
    <property type="evidence" value="ECO:0007669"/>
    <property type="project" value="UniProtKB-UniRule"/>
</dbReference>
<dbReference type="CDD" id="cd24050">
    <property type="entry name" value="ASKHA_NBD_ANMK"/>
    <property type="match status" value="1"/>
</dbReference>
<dbReference type="Gene3D" id="3.30.420.40">
    <property type="match status" value="2"/>
</dbReference>
<dbReference type="HAMAP" id="MF_01270">
    <property type="entry name" value="AnhMurNAc_kinase"/>
    <property type="match status" value="1"/>
</dbReference>
<dbReference type="InterPro" id="IPR005338">
    <property type="entry name" value="Anhydro_N_Ac-Mur_kinase"/>
</dbReference>
<dbReference type="InterPro" id="IPR043129">
    <property type="entry name" value="ATPase_NBD"/>
</dbReference>
<dbReference type="NCBIfam" id="NF007142">
    <property type="entry name" value="PRK09585.2-1"/>
    <property type="match status" value="1"/>
</dbReference>
<dbReference type="NCBIfam" id="NF007148">
    <property type="entry name" value="PRK09585.3-2"/>
    <property type="match status" value="1"/>
</dbReference>
<dbReference type="PANTHER" id="PTHR30605">
    <property type="entry name" value="ANHYDRO-N-ACETYLMURAMIC ACID KINASE"/>
    <property type="match status" value="1"/>
</dbReference>
<dbReference type="PANTHER" id="PTHR30605:SF0">
    <property type="entry name" value="ANHYDRO-N-ACETYLMURAMIC ACID KINASE"/>
    <property type="match status" value="1"/>
</dbReference>
<dbReference type="Pfam" id="PF03702">
    <property type="entry name" value="AnmK"/>
    <property type="match status" value="1"/>
</dbReference>
<dbReference type="SUPFAM" id="SSF53067">
    <property type="entry name" value="Actin-like ATPase domain"/>
    <property type="match status" value="1"/>
</dbReference>
<keyword id="KW-0067">ATP-binding</keyword>
<keyword id="KW-0119">Carbohydrate metabolism</keyword>
<keyword id="KW-0418">Kinase</keyword>
<keyword id="KW-0547">Nucleotide-binding</keyword>
<keyword id="KW-1185">Reference proteome</keyword>
<keyword id="KW-0808">Transferase</keyword>
<organism>
    <name type="scientific">Clostridioides difficile (strain 630)</name>
    <name type="common">Peptoclostridium difficile</name>
    <dbReference type="NCBI Taxonomy" id="272563"/>
    <lineage>
        <taxon>Bacteria</taxon>
        <taxon>Bacillati</taxon>
        <taxon>Bacillota</taxon>
        <taxon>Clostridia</taxon>
        <taxon>Peptostreptococcales</taxon>
        <taxon>Peptostreptococcaceae</taxon>
        <taxon>Clostridioides</taxon>
    </lineage>
</organism>
<name>ANMK_CLOD6</name>